<gene>
    <name evidence="1" type="primary">glyQ</name>
    <name type="ordered locus">EcSMS35_3882</name>
</gene>
<sequence length="303" mass="34716">MQKFDTRTFQGLILTLQDYWARQGCTIVQPLDMEVGAGTSHPMTCLRALGPEPMAAAYVQPSRRPTDGRYGENPNRLQHYYQFQVVIKPSPDNIQELYLGSLKELGMDPTIHDIRFVEDNWENPTLGAWGLGWEVWLNGMEVTQFTYFQQVGGLECKPVTGEITYGLERLAMYIQGVDSVYDLVWSDGPLGKTTYGDVFHQNEVEQSTYNFEYADVDFLFTCFEQYEKEAQQLLALENPLPLPAYERILKAAHSFNLLDARKAISVTERQRYILRIRTLTKAVAEAYYASREALGFPMCNKDK</sequence>
<dbReference type="EC" id="6.1.1.14" evidence="1"/>
<dbReference type="EMBL" id="CP000970">
    <property type="protein sequence ID" value="ACB19706.1"/>
    <property type="molecule type" value="Genomic_DNA"/>
</dbReference>
<dbReference type="RefSeq" id="WP_001168544.1">
    <property type="nucleotide sequence ID" value="NC_010498.1"/>
</dbReference>
<dbReference type="SMR" id="B1LJC1"/>
<dbReference type="GeneID" id="93778290"/>
<dbReference type="KEGG" id="ecm:EcSMS35_3882"/>
<dbReference type="HOGENOM" id="CLU_057066_1_0_6"/>
<dbReference type="Proteomes" id="UP000007011">
    <property type="component" value="Chromosome"/>
</dbReference>
<dbReference type="GO" id="GO:0005829">
    <property type="term" value="C:cytosol"/>
    <property type="evidence" value="ECO:0007669"/>
    <property type="project" value="TreeGrafter"/>
</dbReference>
<dbReference type="GO" id="GO:0005524">
    <property type="term" value="F:ATP binding"/>
    <property type="evidence" value="ECO:0007669"/>
    <property type="project" value="UniProtKB-UniRule"/>
</dbReference>
<dbReference type="GO" id="GO:0004820">
    <property type="term" value="F:glycine-tRNA ligase activity"/>
    <property type="evidence" value="ECO:0007669"/>
    <property type="project" value="UniProtKB-UniRule"/>
</dbReference>
<dbReference type="GO" id="GO:0006426">
    <property type="term" value="P:glycyl-tRNA aminoacylation"/>
    <property type="evidence" value="ECO:0007669"/>
    <property type="project" value="UniProtKB-UniRule"/>
</dbReference>
<dbReference type="CDD" id="cd00733">
    <property type="entry name" value="GlyRS_alpha_core"/>
    <property type="match status" value="1"/>
</dbReference>
<dbReference type="FunFam" id="1.20.58.180:FF:000001">
    <property type="entry name" value="Glycine--tRNA ligase alpha subunit"/>
    <property type="match status" value="1"/>
</dbReference>
<dbReference type="FunFam" id="3.30.930.10:FF:000006">
    <property type="entry name" value="Glycine--tRNA ligase alpha subunit"/>
    <property type="match status" value="1"/>
</dbReference>
<dbReference type="Gene3D" id="3.30.930.10">
    <property type="entry name" value="Bira Bifunctional Protein, Domain 2"/>
    <property type="match status" value="1"/>
</dbReference>
<dbReference type="Gene3D" id="1.20.58.180">
    <property type="entry name" value="Class II aaRS and biotin synthetases, domain 2"/>
    <property type="match status" value="1"/>
</dbReference>
<dbReference type="HAMAP" id="MF_00254">
    <property type="entry name" value="Gly_tRNA_synth_alpha"/>
    <property type="match status" value="1"/>
</dbReference>
<dbReference type="InterPro" id="IPR045864">
    <property type="entry name" value="aa-tRNA-synth_II/BPL/LPL"/>
</dbReference>
<dbReference type="InterPro" id="IPR006194">
    <property type="entry name" value="Gly-tRNA-synth_heterodimer"/>
</dbReference>
<dbReference type="InterPro" id="IPR002310">
    <property type="entry name" value="Gly-tRNA_ligase_asu"/>
</dbReference>
<dbReference type="NCBIfam" id="TIGR00388">
    <property type="entry name" value="glyQ"/>
    <property type="match status" value="1"/>
</dbReference>
<dbReference type="NCBIfam" id="NF006827">
    <property type="entry name" value="PRK09348.1"/>
    <property type="match status" value="1"/>
</dbReference>
<dbReference type="PANTHER" id="PTHR30075:SF2">
    <property type="entry name" value="GLYCINE--TRNA LIGASE, CHLOROPLASTIC_MITOCHONDRIAL 2"/>
    <property type="match status" value="1"/>
</dbReference>
<dbReference type="PANTHER" id="PTHR30075">
    <property type="entry name" value="GLYCYL-TRNA SYNTHETASE"/>
    <property type="match status" value="1"/>
</dbReference>
<dbReference type="Pfam" id="PF02091">
    <property type="entry name" value="tRNA-synt_2e"/>
    <property type="match status" value="1"/>
</dbReference>
<dbReference type="PRINTS" id="PR01044">
    <property type="entry name" value="TRNASYNTHGA"/>
</dbReference>
<dbReference type="SUPFAM" id="SSF55681">
    <property type="entry name" value="Class II aaRS and biotin synthetases"/>
    <property type="match status" value="1"/>
</dbReference>
<dbReference type="PROSITE" id="PS50861">
    <property type="entry name" value="AA_TRNA_LIGASE_II_GLYAB"/>
    <property type="match status" value="1"/>
</dbReference>
<name>SYGA_ECOSM</name>
<organism>
    <name type="scientific">Escherichia coli (strain SMS-3-5 / SECEC)</name>
    <dbReference type="NCBI Taxonomy" id="439855"/>
    <lineage>
        <taxon>Bacteria</taxon>
        <taxon>Pseudomonadati</taxon>
        <taxon>Pseudomonadota</taxon>
        <taxon>Gammaproteobacteria</taxon>
        <taxon>Enterobacterales</taxon>
        <taxon>Enterobacteriaceae</taxon>
        <taxon>Escherichia</taxon>
    </lineage>
</organism>
<proteinExistence type="inferred from homology"/>
<reference key="1">
    <citation type="journal article" date="2008" name="J. Bacteriol.">
        <title>Insights into the environmental resistance gene pool from the genome sequence of the multidrug-resistant environmental isolate Escherichia coli SMS-3-5.</title>
        <authorList>
            <person name="Fricke W.F."/>
            <person name="Wright M.S."/>
            <person name="Lindell A.H."/>
            <person name="Harkins D.M."/>
            <person name="Baker-Austin C."/>
            <person name="Ravel J."/>
            <person name="Stepanauskas R."/>
        </authorList>
    </citation>
    <scope>NUCLEOTIDE SEQUENCE [LARGE SCALE GENOMIC DNA]</scope>
    <source>
        <strain>SMS-3-5 / SECEC</strain>
    </source>
</reference>
<accession>B1LJC1</accession>
<feature type="chain" id="PRO_1000197187" description="Glycine--tRNA ligase alpha subunit">
    <location>
        <begin position="1"/>
        <end position="303"/>
    </location>
</feature>
<evidence type="ECO:0000255" key="1">
    <source>
        <dbReference type="HAMAP-Rule" id="MF_00254"/>
    </source>
</evidence>
<comment type="catalytic activity">
    <reaction evidence="1">
        <text>tRNA(Gly) + glycine + ATP = glycyl-tRNA(Gly) + AMP + diphosphate</text>
        <dbReference type="Rhea" id="RHEA:16013"/>
        <dbReference type="Rhea" id="RHEA-COMP:9664"/>
        <dbReference type="Rhea" id="RHEA-COMP:9683"/>
        <dbReference type="ChEBI" id="CHEBI:30616"/>
        <dbReference type="ChEBI" id="CHEBI:33019"/>
        <dbReference type="ChEBI" id="CHEBI:57305"/>
        <dbReference type="ChEBI" id="CHEBI:78442"/>
        <dbReference type="ChEBI" id="CHEBI:78522"/>
        <dbReference type="ChEBI" id="CHEBI:456215"/>
        <dbReference type="EC" id="6.1.1.14"/>
    </reaction>
</comment>
<comment type="subunit">
    <text evidence="1">Tetramer of two alpha and two beta subunits.</text>
</comment>
<comment type="subcellular location">
    <subcellularLocation>
        <location evidence="1">Cytoplasm</location>
    </subcellularLocation>
</comment>
<comment type="similarity">
    <text evidence="1">Belongs to the class-II aminoacyl-tRNA synthetase family.</text>
</comment>
<keyword id="KW-0030">Aminoacyl-tRNA synthetase</keyword>
<keyword id="KW-0067">ATP-binding</keyword>
<keyword id="KW-0963">Cytoplasm</keyword>
<keyword id="KW-0436">Ligase</keyword>
<keyword id="KW-0547">Nucleotide-binding</keyword>
<keyword id="KW-0648">Protein biosynthesis</keyword>
<protein>
    <recommendedName>
        <fullName evidence="1">Glycine--tRNA ligase alpha subunit</fullName>
        <ecNumber evidence="1">6.1.1.14</ecNumber>
    </recommendedName>
    <alternativeName>
        <fullName evidence="1">Glycyl-tRNA synthetase alpha subunit</fullName>
        <shortName evidence="1">GlyRS</shortName>
    </alternativeName>
</protein>